<organism>
    <name type="scientific">Canine adenovirus serotype 1 (strain Utrecht)</name>
    <name type="common">CAdV-1</name>
    <name type="synonym">Canine adenovirus 1 (strain Utrecht)</name>
    <dbReference type="NCBI Taxonomy" id="36364"/>
    <lineage>
        <taxon>Viruses</taxon>
        <taxon>Varidnaviria</taxon>
        <taxon>Bamfordvirae</taxon>
        <taxon>Preplasmiviricota</taxon>
        <taxon>Tectiliviricetes</taxon>
        <taxon>Rowavirales</taxon>
        <taxon>Adenoviridae</taxon>
        <taxon>Mastadenovirus</taxon>
        <taxon>Canine mastadenovirus A</taxon>
    </lineage>
</organism>
<protein>
    <recommendedName>
        <fullName>Early E3 13.3 kDa protein</fullName>
    </recommendedName>
</protein>
<proteinExistence type="predicted"/>
<feature type="chain" id="PRO_0000221767" description="Early E3 13.3 kDa protein">
    <location>
        <begin position="1"/>
        <end position="119"/>
    </location>
</feature>
<reference key="1">
    <citation type="journal article" date="1992" name="Virus Res.">
        <title>Differences in the E3 regions of the canine adenovirus type 1 and type 2.</title>
        <authorList>
            <person name="Linne T."/>
        </authorList>
    </citation>
    <scope>NUCLEOTIDE SEQUENCE [GENOMIC DNA]</scope>
</reference>
<accession>P68958</accession>
<accession>Q90094</accession>
<sequence>MAMTEESMDQVEVNCLCAQHAQTCTRPRCFAKEGLCANWFYNPALAFEGFDIPDSYQEGHGVDIEVKCSHHSSKLCHNGHDMICSYSRLGSHINIRCICNKPRPHMSLIEAACSMYNLN</sequence>
<organismHost>
    <name type="scientific">Canis lupus familiaris</name>
    <name type="common">Dog</name>
    <name type="synonym">Canis familiaris</name>
    <dbReference type="NCBI Taxonomy" id="9615"/>
</organismHost>
<name>E313_ADECU</name>
<dbReference type="EMBL" id="S38212">
    <property type="protein sequence ID" value="AAB22303.1"/>
    <property type="molecule type" value="Genomic_DNA"/>
</dbReference>
<dbReference type="PIR" id="A45574">
    <property type="entry name" value="A45574"/>
</dbReference>
<dbReference type="RefSeq" id="AP_000629.1">
    <property type="nucleotide sequence ID" value="AC_000020.1"/>
</dbReference>